<reference key="1">
    <citation type="journal article" date="2005" name="DNA Res.">
        <title>Complete genome sequence of the facultative anaerobic magnetotactic bacterium Magnetospirillum sp. strain AMB-1.</title>
        <authorList>
            <person name="Matsunaga T."/>
            <person name="Okamura Y."/>
            <person name="Fukuda Y."/>
            <person name="Wahyudi A.T."/>
            <person name="Murase Y."/>
            <person name="Takeyama H."/>
        </authorList>
    </citation>
    <scope>NUCLEOTIDE SEQUENCE [LARGE SCALE GENOMIC DNA]</scope>
    <source>
        <strain>ATCC 700264 / AMB-1</strain>
    </source>
</reference>
<dbReference type="EC" id="5.2.1.8" evidence="1"/>
<dbReference type="EMBL" id="AP007255">
    <property type="protein sequence ID" value="BAE51597.1"/>
    <property type="status" value="ALT_INIT"/>
    <property type="molecule type" value="Genomic_DNA"/>
</dbReference>
<dbReference type="RefSeq" id="WP_043744592.1">
    <property type="nucleotide sequence ID" value="NC_007626.1"/>
</dbReference>
<dbReference type="SMR" id="Q2W3H8"/>
<dbReference type="STRING" id="342108.amb2793"/>
<dbReference type="KEGG" id="mag:amb2793"/>
<dbReference type="HOGENOM" id="CLU_033058_2_2_5"/>
<dbReference type="OrthoDB" id="9767721at2"/>
<dbReference type="Proteomes" id="UP000007058">
    <property type="component" value="Chromosome"/>
</dbReference>
<dbReference type="GO" id="GO:0005737">
    <property type="term" value="C:cytoplasm"/>
    <property type="evidence" value="ECO:0007669"/>
    <property type="project" value="UniProtKB-SubCell"/>
</dbReference>
<dbReference type="GO" id="GO:0003755">
    <property type="term" value="F:peptidyl-prolyl cis-trans isomerase activity"/>
    <property type="evidence" value="ECO:0007669"/>
    <property type="project" value="UniProtKB-UniRule"/>
</dbReference>
<dbReference type="GO" id="GO:0044183">
    <property type="term" value="F:protein folding chaperone"/>
    <property type="evidence" value="ECO:0007669"/>
    <property type="project" value="TreeGrafter"/>
</dbReference>
<dbReference type="GO" id="GO:0043022">
    <property type="term" value="F:ribosome binding"/>
    <property type="evidence" value="ECO:0007669"/>
    <property type="project" value="TreeGrafter"/>
</dbReference>
<dbReference type="GO" id="GO:0051083">
    <property type="term" value="P:'de novo' cotranslational protein folding"/>
    <property type="evidence" value="ECO:0007669"/>
    <property type="project" value="TreeGrafter"/>
</dbReference>
<dbReference type="GO" id="GO:0051301">
    <property type="term" value="P:cell division"/>
    <property type="evidence" value="ECO:0007669"/>
    <property type="project" value="UniProtKB-KW"/>
</dbReference>
<dbReference type="GO" id="GO:0061077">
    <property type="term" value="P:chaperone-mediated protein folding"/>
    <property type="evidence" value="ECO:0007669"/>
    <property type="project" value="TreeGrafter"/>
</dbReference>
<dbReference type="GO" id="GO:0015031">
    <property type="term" value="P:protein transport"/>
    <property type="evidence" value="ECO:0007669"/>
    <property type="project" value="UniProtKB-UniRule"/>
</dbReference>
<dbReference type="GO" id="GO:0043335">
    <property type="term" value="P:protein unfolding"/>
    <property type="evidence" value="ECO:0007669"/>
    <property type="project" value="TreeGrafter"/>
</dbReference>
<dbReference type="FunFam" id="3.10.50.40:FF:000001">
    <property type="entry name" value="Trigger factor"/>
    <property type="match status" value="1"/>
</dbReference>
<dbReference type="Gene3D" id="3.10.50.40">
    <property type="match status" value="1"/>
</dbReference>
<dbReference type="Gene3D" id="3.30.70.1050">
    <property type="entry name" value="Trigger factor ribosome-binding domain"/>
    <property type="match status" value="1"/>
</dbReference>
<dbReference type="Gene3D" id="1.10.3120.10">
    <property type="entry name" value="Trigger factor, C-terminal domain"/>
    <property type="match status" value="1"/>
</dbReference>
<dbReference type="HAMAP" id="MF_00303">
    <property type="entry name" value="Trigger_factor_Tig"/>
    <property type="match status" value="1"/>
</dbReference>
<dbReference type="InterPro" id="IPR046357">
    <property type="entry name" value="PPIase_dom_sf"/>
</dbReference>
<dbReference type="InterPro" id="IPR001179">
    <property type="entry name" value="PPIase_FKBP_dom"/>
</dbReference>
<dbReference type="InterPro" id="IPR005215">
    <property type="entry name" value="Trig_fac"/>
</dbReference>
<dbReference type="InterPro" id="IPR008880">
    <property type="entry name" value="Trigger_fac_C"/>
</dbReference>
<dbReference type="InterPro" id="IPR037041">
    <property type="entry name" value="Trigger_fac_C_sf"/>
</dbReference>
<dbReference type="InterPro" id="IPR008881">
    <property type="entry name" value="Trigger_fac_ribosome-bd_bac"/>
</dbReference>
<dbReference type="InterPro" id="IPR036611">
    <property type="entry name" value="Trigger_fac_ribosome-bd_sf"/>
</dbReference>
<dbReference type="InterPro" id="IPR027304">
    <property type="entry name" value="Trigger_fact/SurA_dom_sf"/>
</dbReference>
<dbReference type="NCBIfam" id="TIGR00115">
    <property type="entry name" value="tig"/>
    <property type="match status" value="1"/>
</dbReference>
<dbReference type="PANTHER" id="PTHR30560">
    <property type="entry name" value="TRIGGER FACTOR CHAPERONE AND PEPTIDYL-PROLYL CIS/TRANS ISOMERASE"/>
    <property type="match status" value="1"/>
</dbReference>
<dbReference type="PANTHER" id="PTHR30560:SF3">
    <property type="entry name" value="TRIGGER FACTOR-LIKE PROTEIN TIG, CHLOROPLASTIC"/>
    <property type="match status" value="1"/>
</dbReference>
<dbReference type="Pfam" id="PF00254">
    <property type="entry name" value="FKBP_C"/>
    <property type="match status" value="1"/>
</dbReference>
<dbReference type="Pfam" id="PF05698">
    <property type="entry name" value="Trigger_C"/>
    <property type="match status" value="1"/>
</dbReference>
<dbReference type="Pfam" id="PF05697">
    <property type="entry name" value="Trigger_N"/>
    <property type="match status" value="1"/>
</dbReference>
<dbReference type="PIRSF" id="PIRSF003095">
    <property type="entry name" value="Trigger_factor"/>
    <property type="match status" value="1"/>
</dbReference>
<dbReference type="SUPFAM" id="SSF54534">
    <property type="entry name" value="FKBP-like"/>
    <property type="match status" value="1"/>
</dbReference>
<dbReference type="SUPFAM" id="SSF109998">
    <property type="entry name" value="Triger factor/SurA peptide-binding domain-like"/>
    <property type="match status" value="1"/>
</dbReference>
<dbReference type="SUPFAM" id="SSF102735">
    <property type="entry name" value="Trigger factor ribosome-binding domain"/>
    <property type="match status" value="1"/>
</dbReference>
<dbReference type="PROSITE" id="PS50059">
    <property type="entry name" value="FKBP_PPIASE"/>
    <property type="match status" value="1"/>
</dbReference>
<sequence>MQVTEINAEGLKREFKVVVPAQQLETRMQDKLAEIARTVAMPGFRPGKVPMTIVRKKYGGAVMGEILENAVNDGAGKAITDGGLRPAMQPKIEITKYEENSDLEFTVAVEVLPEIKTMDFGTINLVRDKAVVPDAEVDDALAKIAERNETSEPVKRASKSGDVVVIDFVGKVDGVAFPGGTAEGYSLKLGSNTFIPGFEDQLVGKKAESDVEVNVTFPEGYGNETLAGKPALFEVKVKEVRAPKAAAVDDELAKSVGLENLDALKTAIRDEISRELDGVSRMKLKRALLDALSDGHDFPVPPSMLEGEFEAIWKQVEADKEAGRQDPADAAKSEDELKADYRALAERRVRLGLLLADVGRVNEINVTQEDLNRGIMMEARRYPGQEHLVLQYYQKNQEALESLRAPLYEEKVVDFILELAKITDKEVSVEDLRKDPDEASADGEAAPAKPKKKAAAKKKAAE</sequence>
<gene>
    <name evidence="1" type="primary">tig</name>
    <name type="ordered locus">amb2793</name>
</gene>
<feature type="chain" id="PRO_0000256571" description="Trigger factor">
    <location>
        <begin position="1"/>
        <end position="462"/>
    </location>
</feature>
<feature type="domain" description="PPIase FKBP-type" evidence="1">
    <location>
        <begin position="161"/>
        <end position="246"/>
    </location>
</feature>
<feature type="region of interest" description="Disordered" evidence="2">
    <location>
        <begin position="428"/>
        <end position="462"/>
    </location>
</feature>
<feature type="compositionally biased region" description="Basic and acidic residues" evidence="2">
    <location>
        <begin position="428"/>
        <end position="437"/>
    </location>
</feature>
<feature type="compositionally biased region" description="Basic residues" evidence="2">
    <location>
        <begin position="449"/>
        <end position="462"/>
    </location>
</feature>
<keyword id="KW-0131">Cell cycle</keyword>
<keyword id="KW-0132">Cell division</keyword>
<keyword id="KW-0143">Chaperone</keyword>
<keyword id="KW-0963">Cytoplasm</keyword>
<keyword id="KW-0413">Isomerase</keyword>
<keyword id="KW-0697">Rotamase</keyword>
<name>TIG_PARM1</name>
<comment type="function">
    <text evidence="1">Involved in protein export. Acts as a chaperone by maintaining the newly synthesized protein in an open conformation. Functions as a peptidyl-prolyl cis-trans isomerase.</text>
</comment>
<comment type="catalytic activity">
    <reaction evidence="1">
        <text>[protein]-peptidylproline (omega=180) = [protein]-peptidylproline (omega=0)</text>
        <dbReference type="Rhea" id="RHEA:16237"/>
        <dbReference type="Rhea" id="RHEA-COMP:10747"/>
        <dbReference type="Rhea" id="RHEA-COMP:10748"/>
        <dbReference type="ChEBI" id="CHEBI:83833"/>
        <dbReference type="ChEBI" id="CHEBI:83834"/>
        <dbReference type="EC" id="5.2.1.8"/>
    </reaction>
</comment>
<comment type="subcellular location">
    <subcellularLocation>
        <location>Cytoplasm</location>
    </subcellularLocation>
    <text evidence="1">About half TF is bound to the ribosome near the polypeptide exit tunnel while the other half is free in the cytoplasm.</text>
</comment>
<comment type="domain">
    <text evidence="1">Consists of 3 domains; the N-terminus binds the ribosome, the middle domain has PPIase activity, while the C-terminus has intrinsic chaperone activity on its own.</text>
</comment>
<comment type="similarity">
    <text evidence="1">Belongs to the FKBP-type PPIase family. Tig subfamily.</text>
</comment>
<comment type="sequence caution" evidence="3">
    <conflict type="erroneous initiation">
        <sequence resource="EMBL-CDS" id="BAE51597"/>
    </conflict>
</comment>
<organism>
    <name type="scientific">Paramagnetospirillum magneticum (strain ATCC 700264 / AMB-1)</name>
    <name type="common">Magnetospirillum magneticum</name>
    <dbReference type="NCBI Taxonomy" id="342108"/>
    <lineage>
        <taxon>Bacteria</taxon>
        <taxon>Pseudomonadati</taxon>
        <taxon>Pseudomonadota</taxon>
        <taxon>Alphaproteobacteria</taxon>
        <taxon>Rhodospirillales</taxon>
        <taxon>Magnetospirillaceae</taxon>
        <taxon>Paramagnetospirillum</taxon>
    </lineage>
</organism>
<protein>
    <recommendedName>
        <fullName evidence="1">Trigger factor</fullName>
        <shortName evidence="1">TF</shortName>
        <ecNumber evidence="1">5.2.1.8</ecNumber>
    </recommendedName>
    <alternativeName>
        <fullName evidence="1">PPIase</fullName>
    </alternativeName>
</protein>
<proteinExistence type="inferred from homology"/>
<accession>Q2W3H8</accession>
<evidence type="ECO:0000255" key="1">
    <source>
        <dbReference type="HAMAP-Rule" id="MF_00303"/>
    </source>
</evidence>
<evidence type="ECO:0000256" key="2">
    <source>
        <dbReference type="SAM" id="MobiDB-lite"/>
    </source>
</evidence>
<evidence type="ECO:0000305" key="3"/>